<accession>Q9XIA4</accession>
<evidence type="ECO:0000250" key="1"/>
<evidence type="ECO:0000255" key="2"/>
<evidence type="ECO:0000256" key="3">
    <source>
        <dbReference type="SAM" id="MobiDB-lite"/>
    </source>
</evidence>
<evidence type="ECO:0000305" key="4"/>
<comment type="function">
    <text evidence="1">Required during biogenesis of c-type cytochromes (cytochrome c6 and cytochrome f) at the step of heme attachment.</text>
</comment>
<comment type="subunit">
    <text evidence="1">May interact with ccsA.</text>
</comment>
<comment type="subcellular location">
    <subcellularLocation>
        <location evidence="1">Plastid</location>
        <location evidence="1">Chloroplast thylakoid membrane</location>
        <topology evidence="1">Multi-pass membrane protein</topology>
    </subcellularLocation>
</comment>
<comment type="similarity">
    <text evidence="4">Belongs to the Ccs1/CcsB family.</text>
</comment>
<sequence>MIVTLNPKILHFSKIHPFSRPSSYLCRTRNVSLITNCKLQKPQDGNQRSSSNRNLTKTISLSDSAPPVTEETGDGIVKGGGNGGGGGGDGRGGLGFLKILPRKVLSVLSNLPLAITEMFTIAALMALGTVIEQGETPDFYFQKYPEDNPVLGFFTWRWISTLGLDHMYSAPIFLGMLVLLAASLMACTYTTQIPLVKVARRWSFMKSDEAIKKQEFADTLPRASIQDLGMILMGDGFEVFMKGPSLYAFKGLAGRFAPIGVHIAMLLIMVGGTLSATGSFRGSVTVPQGLNFVMGDVLAPIGFFSIPTDAFNTEVHVNRFTMDYYDSGEVSQFHSDLSLRDLNGKEVLRKTISVNDPLRYGGVTVYQTDWSFSALQVTKDGEGPFNLAMAPIKINGDKKLYGTFLPVGDTNAPNVKGISMLARDLQSIVVYDLDGKFAGIRRPSSKLPIEINGMKIVIEDAIGSTGLELKTDPGVPVVYAGFGALMLTTCISYLSHSQIWALQNGTALVVGGKTNRAKNQFPDDMNRLLDQVPELIKKNTSVVSEQS</sequence>
<keyword id="KW-0150">Chloroplast</keyword>
<keyword id="KW-0201">Cytochrome c-type biogenesis</keyword>
<keyword id="KW-0472">Membrane</keyword>
<keyword id="KW-0934">Plastid</keyword>
<keyword id="KW-1185">Reference proteome</keyword>
<keyword id="KW-0793">Thylakoid</keyword>
<keyword id="KW-0809">Transit peptide</keyword>
<keyword id="KW-0812">Transmembrane</keyword>
<keyword id="KW-1133">Transmembrane helix</keyword>
<name>CCS1_ARATH</name>
<protein>
    <recommendedName>
        <fullName>Cytochrome c biogenesis protein CCS1, chloroplastic</fullName>
    </recommendedName>
    <alternativeName>
        <fullName>C-type cytochrome synthesis protein 1</fullName>
    </alternativeName>
</protein>
<feature type="transit peptide" description="Chloroplast" evidence="4">
    <location>
        <begin position="1"/>
        <end status="unknown"/>
    </location>
</feature>
<feature type="transit peptide" description="Thylakoid" evidence="4">
    <location>
        <begin status="unknown"/>
        <end position="37"/>
    </location>
</feature>
<feature type="chain" id="PRO_0000363637" description="Cytochrome c biogenesis protein CCS1, chloroplastic">
    <location>
        <begin position="38"/>
        <end position="547"/>
    </location>
</feature>
<feature type="transmembrane region" description="Helical" evidence="2">
    <location>
        <begin position="111"/>
        <end position="131"/>
    </location>
</feature>
<feature type="transmembrane region" description="Helical" evidence="2">
    <location>
        <begin position="170"/>
        <end position="190"/>
    </location>
</feature>
<feature type="transmembrane region" description="Helical" evidence="2">
    <location>
        <begin position="256"/>
        <end position="276"/>
    </location>
</feature>
<feature type="region of interest" description="Disordered" evidence="3">
    <location>
        <begin position="41"/>
        <end position="84"/>
    </location>
</feature>
<feature type="compositionally biased region" description="Polar residues" evidence="3">
    <location>
        <begin position="41"/>
        <end position="63"/>
    </location>
</feature>
<organism>
    <name type="scientific">Arabidopsis thaliana</name>
    <name type="common">Mouse-ear cress</name>
    <dbReference type="NCBI Taxonomy" id="3702"/>
    <lineage>
        <taxon>Eukaryota</taxon>
        <taxon>Viridiplantae</taxon>
        <taxon>Streptophyta</taxon>
        <taxon>Embryophyta</taxon>
        <taxon>Tracheophyta</taxon>
        <taxon>Spermatophyta</taxon>
        <taxon>Magnoliopsida</taxon>
        <taxon>eudicotyledons</taxon>
        <taxon>Gunneridae</taxon>
        <taxon>Pentapetalae</taxon>
        <taxon>rosids</taxon>
        <taxon>malvids</taxon>
        <taxon>Brassicales</taxon>
        <taxon>Brassicaceae</taxon>
        <taxon>Camelineae</taxon>
        <taxon>Arabidopsis</taxon>
    </lineage>
</organism>
<gene>
    <name type="primary">CCS1</name>
    <name type="ordered locus">At1g49380</name>
    <name type="ORF">F13F21.19</name>
</gene>
<proteinExistence type="evidence at protein level"/>
<dbReference type="EMBL" id="AC007504">
    <property type="protein sequence ID" value="AAD43162.1"/>
    <property type="molecule type" value="Genomic_DNA"/>
</dbReference>
<dbReference type="EMBL" id="CP002684">
    <property type="protein sequence ID" value="AEE32423.1"/>
    <property type="molecule type" value="Genomic_DNA"/>
</dbReference>
<dbReference type="EMBL" id="AK117293">
    <property type="protein sequence ID" value="BAC41965.1"/>
    <property type="molecule type" value="mRNA"/>
</dbReference>
<dbReference type="PIR" id="B96530">
    <property type="entry name" value="B96530"/>
</dbReference>
<dbReference type="RefSeq" id="NP_564544.1">
    <property type="nucleotide sequence ID" value="NM_103828.3"/>
</dbReference>
<dbReference type="FunCoup" id="Q9XIA4">
    <property type="interactions" value="1113"/>
</dbReference>
<dbReference type="STRING" id="3702.Q9XIA4"/>
<dbReference type="iPTMnet" id="Q9XIA4"/>
<dbReference type="PaxDb" id="3702-AT1G49380.1"/>
<dbReference type="ProteomicsDB" id="224383"/>
<dbReference type="EnsemblPlants" id="AT1G49380.1">
    <property type="protein sequence ID" value="AT1G49380.1"/>
    <property type="gene ID" value="AT1G49380"/>
</dbReference>
<dbReference type="GeneID" id="841361"/>
<dbReference type="Gramene" id="AT1G49380.1">
    <property type="protein sequence ID" value="AT1G49380.1"/>
    <property type="gene ID" value="AT1G49380"/>
</dbReference>
<dbReference type="KEGG" id="ath:AT1G49380"/>
<dbReference type="Araport" id="AT1G49380"/>
<dbReference type="TAIR" id="AT1G49380"/>
<dbReference type="eggNOG" id="ENOG502QRFF">
    <property type="taxonomic scope" value="Eukaryota"/>
</dbReference>
<dbReference type="HOGENOM" id="CLU_034630_0_0_1"/>
<dbReference type="InParanoid" id="Q9XIA4"/>
<dbReference type="OMA" id="RFWIDYT"/>
<dbReference type="PhylomeDB" id="Q9XIA4"/>
<dbReference type="PRO" id="PR:Q9XIA4"/>
<dbReference type="Proteomes" id="UP000006548">
    <property type="component" value="Chromosome 1"/>
</dbReference>
<dbReference type="ExpressionAtlas" id="Q9XIA4">
    <property type="expression patterns" value="baseline and differential"/>
</dbReference>
<dbReference type="GO" id="GO:0009535">
    <property type="term" value="C:chloroplast thylakoid membrane"/>
    <property type="evidence" value="ECO:0007669"/>
    <property type="project" value="UniProtKB-SubCell"/>
</dbReference>
<dbReference type="GO" id="GO:0017004">
    <property type="term" value="P:cytochrome complex assembly"/>
    <property type="evidence" value="ECO:0007669"/>
    <property type="project" value="UniProtKB-KW"/>
</dbReference>
<dbReference type="HAMAP" id="MF_01392">
    <property type="entry name" value="CytC_Ccs1"/>
    <property type="match status" value="1"/>
</dbReference>
<dbReference type="InterPro" id="IPR023494">
    <property type="entry name" value="Cyt_c_bgen_Ccs1/CcsB/ResB"/>
</dbReference>
<dbReference type="InterPro" id="IPR007816">
    <property type="entry name" value="ResB-like_domain"/>
</dbReference>
<dbReference type="PANTHER" id="PTHR31566">
    <property type="entry name" value="CYTOCHROME C BIOGENESIS PROTEIN CCS1, CHLOROPLASTIC"/>
    <property type="match status" value="1"/>
</dbReference>
<dbReference type="PANTHER" id="PTHR31566:SF0">
    <property type="entry name" value="CYTOCHROME C BIOGENESIS PROTEIN CCS1, CHLOROPLASTIC"/>
    <property type="match status" value="1"/>
</dbReference>
<dbReference type="Pfam" id="PF05140">
    <property type="entry name" value="ResB"/>
    <property type="match status" value="2"/>
</dbReference>
<reference key="1">
    <citation type="journal article" date="2000" name="Nature">
        <title>Sequence and analysis of chromosome 1 of the plant Arabidopsis thaliana.</title>
        <authorList>
            <person name="Theologis A."/>
            <person name="Ecker J.R."/>
            <person name="Palm C.J."/>
            <person name="Federspiel N.A."/>
            <person name="Kaul S."/>
            <person name="White O."/>
            <person name="Alonso J."/>
            <person name="Altafi H."/>
            <person name="Araujo R."/>
            <person name="Bowman C.L."/>
            <person name="Brooks S.Y."/>
            <person name="Buehler E."/>
            <person name="Chan A."/>
            <person name="Chao Q."/>
            <person name="Chen H."/>
            <person name="Cheuk R.F."/>
            <person name="Chin C.W."/>
            <person name="Chung M.K."/>
            <person name="Conn L."/>
            <person name="Conway A.B."/>
            <person name="Conway A.R."/>
            <person name="Creasy T.H."/>
            <person name="Dewar K."/>
            <person name="Dunn P."/>
            <person name="Etgu P."/>
            <person name="Feldblyum T.V."/>
            <person name="Feng J.-D."/>
            <person name="Fong B."/>
            <person name="Fujii C.Y."/>
            <person name="Gill J.E."/>
            <person name="Goldsmith A.D."/>
            <person name="Haas B."/>
            <person name="Hansen N.F."/>
            <person name="Hughes B."/>
            <person name="Huizar L."/>
            <person name="Hunter J.L."/>
            <person name="Jenkins J."/>
            <person name="Johnson-Hopson C."/>
            <person name="Khan S."/>
            <person name="Khaykin E."/>
            <person name="Kim C.J."/>
            <person name="Koo H.L."/>
            <person name="Kremenetskaia I."/>
            <person name="Kurtz D.B."/>
            <person name="Kwan A."/>
            <person name="Lam B."/>
            <person name="Langin-Hooper S."/>
            <person name="Lee A."/>
            <person name="Lee J.M."/>
            <person name="Lenz C.A."/>
            <person name="Li J.H."/>
            <person name="Li Y.-P."/>
            <person name="Lin X."/>
            <person name="Liu S.X."/>
            <person name="Liu Z.A."/>
            <person name="Luros J.S."/>
            <person name="Maiti R."/>
            <person name="Marziali A."/>
            <person name="Militscher J."/>
            <person name="Miranda M."/>
            <person name="Nguyen M."/>
            <person name="Nierman W.C."/>
            <person name="Osborne B.I."/>
            <person name="Pai G."/>
            <person name="Peterson J."/>
            <person name="Pham P.K."/>
            <person name="Rizzo M."/>
            <person name="Rooney T."/>
            <person name="Rowley D."/>
            <person name="Sakano H."/>
            <person name="Salzberg S.L."/>
            <person name="Schwartz J.R."/>
            <person name="Shinn P."/>
            <person name="Southwick A.M."/>
            <person name="Sun H."/>
            <person name="Tallon L.J."/>
            <person name="Tambunga G."/>
            <person name="Toriumi M.J."/>
            <person name="Town C.D."/>
            <person name="Utterback T."/>
            <person name="Van Aken S."/>
            <person name="Vaysberg M."/>
            <person name="Vysotskaia V.S."/>
            <person name="Walker M."/>
            <person name="Wu D."/>
            <person name="Yu G."/>
            <person name="Fraser C.M."/>
            <person name="Venter J.C."/>
            <person name="Davis R.W."/>
        </authorList>
    </citation>
    <scope>NUCLEOTIDE SEQUENCE [LARGE SCALE GENOMIC DNA]</scope>
    <source>
        <strain>cv. Columbia</strain>
    </source>
</reference>
<reference key="2">
    <citation type="journal article" date="2017" name="Plant J.">
        <title>Araport11: a complete reannotation of the Arabidopsis thaliana reference genome.</title>
        <authorList>
            <person name="Cheng C.Y."/>
            <person name="Krishnakumar V."/>
            <person name="Chan A.P."/>
            <person name="Thibaud-Nissen F."/>
            <person name="Schobel S."/>
            <person name="Town C.D."/>
        </authorList>
    </citation>
    <scope>GENOME REANNOTATION</scope>
    <source>
        <strain>cv. Columbia</strain>
    </source>
</reference>
<reference key="3">
    <citation type="journal article" date="2002" name="Science">
        <title>Functional annotation of a full-length Arabidopsis cDNA collection.</title>
        <authorList>
            <person name="Seki M."/>
            <person name="Narusaka M."/>
            <person name="Kamiya A."/>
            <person name="Ishida J."/>
            <person name="Satou M."/>
            <person name="Sakurai T."/>
            <person name="Nakajima M."/>
            <person name="Enju A."/>
            <person name="Akiyama K."/>
            <person name="Oono Y."/>
            <person name="Muramatsu M."/>
            <person name="Hayashizaki Y."/>
            <person name="Kawai J."/>
            <person name="Carninci P."/>
            <person name="Itoh M."/>
            <person name="Ishii Y."/>
            <person name="Arakawa T."/>
            <person name="Shibata K."/>
            <person name="Shinagawa A."/>
            <person name="Shinozaki K."/>
        </authorList>
    </citation>
    <scope>NUCLEOTIDE SEQUENCE [LARGE SCALE MRNA]</scope>
    <source>
        <strain>cv. Columbia</strain>
    </source>
</reference>
<reference key="4">
    <citation type="journal article" date="2009" name="Plant Physiol.">
        <title>Large-scale Arabidopsis phosphoproteome profiling reveals novel chloroplast kinase substrates and phosphorylation networks.</title>
        <authorList>
            <person name="Reiland S."/>
            <person name="Messerli G."/>
            <person name="Baerenfaller K."/>
            <person name="Gerrits B."/>
            <person name="Endler A."/>
            <person name="Grossmann J."/>
            <person name="Gruissem W."/>
            <person name="Baginsky S."/>
        </authorList>
    </citation>
    <scope>IDENTIFICATION BY MASS SPECTROMETRY [LARGE SCALE ANALYSIS]</scope>
</reference>